<feature type="chain" id="PRO_0000376201" description="NADH-quinone oxidoreductase subunit B">
    <location>
        <begin position="1"/>
        <end position="179"/>
    </location>
</feature>
<feature type="binding site" evidence="1">
    <location>
        <position position="52"/>
    </location>
    <ligand>
        <name>[4Fe-4S] cluster</name>
        <dbReference type="ChEBI" id="CHEBI:49883"/>
    </ligand>
</feature>
<feature type="binding site" evidence="1">
    <location>
        <position position="53"/>
    </location>
    <ligand>
        <name>[4Fe-4S] cluster</name>
        <dbReference type="ChEBI" id="CHEBI:49883"/>
    </ligand>
</feature>
<feature type="binding site" evidence="1">
    <location>
        <position position="117"/>
    </location>
    <ligand>
        <name>[4Fe-4S] cluster</name>
        <dbReference type="ChEBI" id="CHEBI:49883"/>
    </ligand>
</feature>
<feature type="binding site" evidence="1">
    <location>
        <position position="147"/>
    </location>
    <ligand>
        <name>[4Fe-4S] cluster</name>
        <dbReference type="ChEBI" id="CHEBI:49883"/>
    </ligand>
</feature>
<proteinExistence type="inferred from homology"/>
<keyword id="KW-0004">4Fe-4S</keyword>
<keyword id="KW-0997">Cell inner membrane</keyword>
<keyword id="KW-1003">Cell membrane</keyword>
<keyword id="KW-0408">Iron</keyword>
<keyword id="KW-0411">Iron-sulfur</keyword>
<keyword id="KW-0472">Membrane</keyword>
<keyword id="KW-0479">Metal-binding</keyword>
<keyword id="KW-0520">NAD</keyword>
<keyword id="KW-0874">Quinone</keyword>
<keyword id="KW-1185">Reference proteome</keyword>
<keyword id="KW-1278">Translocase</keyword>
<keyword id="KW-0813">Transport</keyword>
<keyword id="KW-0830">Ubiquinone</keyword>
<reference key="1">
    <citation type="journal article" date="2006" name="PLoS Genet.">
        <title>Comparative genomics of emerging human ehrlichiosis agents.</title>
        <authorList>
            <person name="Dunning Hotopp J.C."/>
            <person name="Lin M."/>
            <person name="Madupu R."/>
            <person name="Crabtree J."/>
            <person name="Angiuoli S.V."/>
            <person name="Eisen J.A."/>
            <person name="Seshadri R."/>
            <person name="Ren Q."/>
            <person name="Wu M."/>
            <person name="Utterback T.R."/>
            <person name="Smith S."/>
            <person name="Lewis M."/>
            <person name="Khouri H."/>
            <person name="Zhang C."/>
            <person name="Niu H."/>
            <person name="Lin Q."/>
            <person name="Ohashi N."/>
            <person name="Zhi N."/>
            <person name="Nelson W.C."/>
            <person name="Brinkac L.M."/>
            <person name="Dodson R.J."/>
            <person name="Rosovitz M.J."/>
            <person name="Sundaram J.P."/>
            <person name="Daugherty S.C."/>
            <person name="Davidsen T."/>
            <person name="Durkin A.S."/>
            <person name="Gwinn M.L."/>
            <person name="Haft D.H."/>
            <person name="Selengut J.D."/>
            <person name="Sullivan S.A."/>
            <person name="Zafar N."/>
            <person name="Zhou L."/>
            <person name="Benahmed F."/>
            <person name="Forberger H."/>
            <person name="Halpin R."/>
            <person name="Mulligan S."/>
            <person name="Robinson J."/>
            <person name="White O."/>
            <person name="Rikihisa Y."/>
            <person name="Tettelin H."/>
        </authorList>
    </citation>
    <scope>NUCLEOTIDE SEQUENCE [LARGE SCALE GENOMIC DNA]</scope>
    <source>
        <strain>ATCC CRL-10679 / Arkansas</strain>
    </source>
</reference>
<organism>
    <name type="scientific">Ehrlichia chaffeensis (strain ATCC CRL-10679 / Arkansas)</name>
    <dbReference type="NCBI Taxonomy" id="205920"/>
    <lineage>
        <taxon>Bacteria</taxon>
        <taxon>Pseudomonadati</taxon>
        <taxon>Pseudomonadota</taxon>
        <taxon>Alphaproteobacteria</taxon>
        <taxon>Rickettsiales</taxon>
        <taxon>Anaplasmataceae</taxon>
        <taxon>Ehrlichia</taxon>
    </lineage>
</organism>
<sequence length="179" mass="20232">MINKNDSVLNNQFWQSYNHQGFMVTQFSDLINYISNWARSNSLWPMTFGLACCAVEMMHTAASRYDLDRYGVMFRASPRQADVMIVAGTLTNKMAPALRKVYDQMTEPRYVISMGSCANGGGYYHYSYSVVRGCDRIVPVDIYVPGCPPTAEALLYGIFCLQQKINRGNTSITRKSTQD</sequence>
<accession>Q2GG48</accession>
<gene>
    <name evidence="1" type="primary">nuoB</name>
    <name type="ordered locus">ECH_0787</name>
</gene>
<protein>
    <recommendedName>
        <fullName evidence="1">NADH-quinone oxidoreductase subunit B</fullName>
        <ecNumber evidence="1">7.1.1.-</ecNumber>
    </recommendedName>
    <alternativeName>
        <fullName evidence="1">NADH dehydrogenase I subunit B</fullName>
    </alternativeName>
    <alternativeName>
        <fullName evidence="1">NDH-1 subunit B</fullName>
    </alternativeName>
</protein>
<name>NUOB_EHRCR</name>
<comment type="function">
    <text evidence="1">NDH-1 shuttles electrons from NADH, via FMN and iron-sulfur (Fe-S) centers, to quinones in the respiratory chain. The immediate electron acceptor for the enzyme in this species is believed to be ubiquinone. Couples the redox reaction to proton translocation (for every two electrons transferred, four hydrogen ions are translocated across the cytoplasmic membrane), and thus conserves the redox energy in a proton gradient.</text>
</comment>
<comment type="catalytic activity">
    <reaction evidence="1">
        <text>a quinone + NADH + 5 H(+)(in) = a quinol + NAD(+) + 4 H(+)(out)</text>
        <dbReference type="Rhea" id="RHEA:57888"/>
        <dbReference type="ChEBI" id="CHEBI:15378"/>
        <dbReference type="ChEBI" id="CHEBI:24646"/>
        <dbReference type="ChEBI" id="CHEBI:57540"/>
        <dbReference type="ChEBI" id="CHEBI:57945"/>
        <dbReference type="ChEBI" id="CHEBI:132124"/>
    </reaction>
</comment>
<comment type="cofactor">
    <cofactor evidence="1">
        <name>[4Fe-4S] cluster</name>
        <dbReference type="ChEBI" id="CHEBI:49883"/>
    </cofactor>
    <text evidence="1">Binds 1 [4Fe-4S] cluster.</text>
</comment>
<comment type="subunit">
    <text evidence="1">NDH-1 is composed of 14 different subunits. Subunits NuoB, C, D, E, F, and G constitute the peripheral sector of the complex.</text>
</comment>
<comment type="subcellular location">
    <subcellularLocation>
        <location evidence="1">Cell inner membrane</location>
        <topology evidence="1">Peripheral membrane protein</topology>
        <orientation evidence="1">Cytoplasmic side</orientation>
    </subcellularLocation>
</comment>
<comment type="similarity">
    <text evidence="1">Belongs to the complex I 20 kDa subunit family.</text>
</comment>
<dbReference type="EC" id="7.1.1.-" evidence="1"/>
<dbReference type="EMBL" id="CP000236">
    <property type="protein sequence ID" value="ABD44929.1"/>
    <property type="molecule type" value="Genomic_DNA"/>
</dbReference>
<dbReference type="RefSeq" id="WP_011452812.1">
    <property type="nucleotide sequence ID" value="NC_007799.1"/>
</dbReference>
<dbReference type="SMR" id="Q2GG48"/>
<dbReference type="STRING" id="205920.ECH_0787"/>
<dbReference type="KEGG" id="ech:ECH_0787"/>
<dbReference type="eggNOG" id="COG0377">
    <property type="taxonomic scope" value="Bacteria"/>
</dbReference>
<dbReference type="HOGENOM" id="CLU_055737_7_3_5"/>
<dbReference type="OrthoDB" id="9786737at2"/>
<dbReference type="Proteomes" id="UP000008320">
    <property type="component" value="Chromosome"/>
</dbReference>
<dbReference type="GO" id="GO:0005886">
    <property type="term" value="C:plasma membrane"/>
    <property type="evidence" value="ECO:0007669"/>
    <property type="project" value="UniProtKB-SubCell"/>
</dbReference>
<dbReference type="GO" id="GO:0045271">
    <property type="term" value="C:respiratory chain complex I"/>
    <property type="evidence" value="ECO:0007669"/>
    <property type="project" value="TreeGrafter"/>
</dbReference>
<dbReference type="GO" id="GO:0051539">
    <property type="term" value="F:4 iron, 4 sulfur cluster binding"/>
    <property type="evidence" value="ECO:0007669"/>
    <property type="project" value="UniProtKB-KW"/>
</dbReference>
<dbReference type="GO" id="GO:0005506">
    <property type="term" value="F:iron ion binding"/>
    <property type="evidence" value="ECO:0007669"/>
    <property type="project" value="UniProtKB-UniRule"/>
</dbReference>
<dbReference type="GO" id="GO:0008137">
    <property type="term" value="F:NADH dehydrogenase (ubiquinone) activity"/>
    <property type="evidence" value="ECO:0007669"/>
    <property type="project" value="InterPro"/>
</dbReference>
<dbReference type="GO" id="GO:0050136">
    <property type="term" value="F:NADH:ubiquinone reductase (non-electrogenic) activity"/>
    <property type="evidence" value="ECO:0007669"/>
    <property type="project" value="UniProtKB-UniRule"/>
</dbReference>
<dbReference type="GO" id="GO:0048038">
    <property type="term" value="F:quinone binding"/>
    <property type="evidence" value="ECO:0007669"/>
    <property type="project" value="UniProtKB-KW"/>
</dbReference>
<dbReference type="GO" id="GO:0009060">
    <property type="term" value="P:aerobic respiration"/>
    <property type="evidence" value="ECO:0007669"/>
    <property type="project" value="TreeGrafter"/>
</dbReference>
<dbReference type="GO" id="GO:0015990">
    <property type="term" value="P:electron transport coupled proton transport"/>
    <property type="evidence" value="ECO:0007669"/>
    <property type="project" value="TreeGrafter"/>
</dbReference>
<dbReference type="GO" id="GO:0032981">
    <property type="term" value="P:mitochondrial respiratory chain complex I assembly"/>
    <property type="evidence" value="ECO:0007669"/>
    <property type="project" value="TreeGrafter"/>
</dbReference>
<dbReference type="FunFam" id="3.40.50.12280:FF:000001">
    <property type="entry name" value="NADH-quinone oxidoreductase subunit B 2"/>
    <property type="match status" value="1"/>
</dbReference>
<dbReference type="Gene3D" id="3.40.50.12280">
    <property type="match status" value="1"/>
</dbReference>
<dbReference type="HAMAP" id="MF_01356">
    <property type="entry name" value="NDH1_NuoB"/>
    <property type="match status" value="1"/>
</dbReference>
<dbReference type="InterPro" id="IPR006137">
    <property type="entry name" value="NADH_UbQ_OxRdtase-like_20kDa"/>
</dbReference>
<dbReference type="InterPro" id="IPR006138">
    <property type="entry name" value="NADH_UQ_OxRdtase_20Kd_su"/>
</dbReference>
<dbReference type="NCBIfam" id="TIGR01957">
    <property type="entry name" value="nuoB_fam"/>
    <property type="match status" value="1"/>
</dbReference>
<dbReference type="NCBIfam" id="NF005012">
    <property type="entry name" value="PRK06411.1"/>
    <property type="match status" value="1"/>
</dbReference>
<dbReference type="PANTHER" id="PTHR11995">
    <property type="entry name" value="NADH DEHYDROGENASE"/>
    <property type="match status" value="1"/>
</dbReference>
<dbReference type="PANTHER" id="PTHR11995:SF14">
    <property type="entry name" value="NADH DEHYDROGENASE [UBIQUINONE] IRON-SULFUR PROTEIN 7, MITOCHONDRIAL"/>
    <property type="match status" value="1"/>
</dbReference>
<dbReference type="Pfam" id="PF01058">
    <property type="entry name" value="Oxidored_q6"/>
    <property type="match status" value="1"/>
</dbReference>
<dbReference type="SUPFAM" id="SSF56770">
    <property type="entry name" value="HydA/Nqo6-like"/>
    <property type="match status" value="1"/>
</dbReference>
<dbReference type="PROSITE" id="PS01150">
    <property type="entry name" value="COMPLEX1_20K"/>
    <property type="match status" value="1"/>
</dbReference>
<evidence type="ECO:0000255" key="1">
    <source>
        <dbReference type="HAMAP-Rule" id="MF_01356"/>
    </source>
</evidence>